<proteinExistence type="inferred from homology"/>
<protein>
    <recommendedName>
        <fullName evidence="1">Single-stranded DNA-binding protein</fullName>
        <shortName evidence="1">SSB</shortName>
    </recommendedName>
</protein>
<name>SSB_XANAC</name>
<reference key="1">
    <citation type="journal article" date="2002" name="Nature">
        <title>Comparison of the genomes of two Xanthomonas pathogens with differing host specificities.</title>
        <authorList>
            <person name="da Silva A.C.R."/>
            <person name="Ferro J.A."/>
            <person name="Reinach F.C."/>
            <person name="Farah C.S."/>
            <person name="Furlan L.R."/>
            <person name="Quaggio R.B."/>
            <person name="Monteiro-Vitorello C.B."/>
            <person name="Van Sluys M.A."/>
            <person name="Almeida N.F. Jr."/>
            <person name="Alves L.M.C."/>
            <person name="do Amaral A.M."/>
            <person name="Bertolini M.C."/>
            <person name="Camargo L.E.A."/>
            <person name="Camarotte G."/>
            <person name="Cannavan F."/>
            <person name="Cardozo J."/>
            <person name="Chambergo F."/>
            <person name="Ciapina L.P."/>
            <person name="Cicarelli R.M.B."/>
            <person name="Coutinho L.L."/>
            <person name="Cursino-Santos J.R."/>
            <person name="El-Dorry H."/>
            <person name="Faria J.B."/>
            <person name="Ferreira A.J.S."/>
            <person name="Ferreira R.C.C."/>
            <person name="Ferro M.I.T."/>
            <person name="Formighieri E.F."/>
            <person name="Franco M.C."/>
            <person name="Greggio C.C."/>
            <person name="Gruber A."/>
            <person name="Katsuyama A.M."/>
            <person name="Kishi L.T."/>
            <person name="Leite R.P."/>
            <person name="Lemos E.G.M."/>
            <person name="Lemos M.V.F."/>
            <person name="Locali E.C."/>
            <person name="Machado M.A."/>
            <person name="Madeira A.M.B.N."/>
            <person name="Martinez-Rossi N.M."/>
            <person name="Martins E.C."/>
            <person name="Meidanis J."/>
            <person name="Menck C.F.M."/>
            <person name="Miyaki C.Y."/>
            <person name="Moon D.H."/>
            <person name="Moreira L.M."/>
            <person name="Novo M.T.M."/>
            <person name="Okura V.K."/>
            <person name="Oliveira M.C."/>
            <person name="Oliveira V.R."/>
            <person name="Pereira H.A."/>
            <person name="Rossi A."/>
            <person name="Sena J.A.D."/>
            <person name="Silva C."/>
            <person name="de Souza R.F."/>
            <person name="Spinola L.A.F."/>
            <person name="Takita M.A."/>
            <person name="Tamura R.E."/>
            <person name="Teixeira E.C."/>
            <person name="Tezza R.I.D."/>
            <person name="Trindade dos Santos M."/>
            <person name="Truffi D."/>
            <person name="Tsai S.M."/>
            <person name="White F.F."/>
            <person name="Setubal J.C."/>
            <person name="Kitajima J.P."/>
        </authorList>
    </citation>
    <scope>NUCLEOTIDE SEQUENCE [LARGE SCALE GENOMIC DNA]</scope>
    <source>
        <strain>306</strain>
    </source>
</reference>
<gene>
    <name type="primary">ssb</name>
    <name type="ordered locus">XAC2905</name>
</gene>
<accession>Q8PIJ2</accession>
<organism>
    <name type="scientific">Xanthomonas axonopodis pv. citri (strain 306)</name>
    <dbReference type="NCBI Taxonomy" id="190486"/>
    <lineage>
        <taxon>Bacteria</taxon>
        <taxon>Pseudomonadati</taxon>
        <taxon>Pseudomonadota</taxon>
        <taxon>Gammaproteobacteria</taxon>
        <taxon>Lysobacterales</taxon>
        <taxon>Lysobacteraceae</taxon>
        <taxon>Xanthomonas</taxon>
    </lineage>
</organism>
<sequence length="180" mass="19096">MARGINKVILVGNLGNDPDTKYTQAGMAITRVSLATTSMRKDRDGNNQERTEWHRVVFFGKLGEIAGEYLRKGSQVYVEGELRYDKYTGQDGVEKYSTDIVANEMQMLGGRGEGGGGGMGGDRPQRSAPRQQGGGGGQGGGGYGGGGGGGGQDYAPRRQQPAQQQSAPPMDDFADDDIPF</sequence>
<dbReference type="EMBL" id="AE008923">
    <property type="protein sequence ID" value="AAM37750.1"/>
    <property type="molecule type" value="Genomic_DNA"/>
</dbReference>
<dbReference type="RefSeq" id="WP_011051914.1">
    <property type="nucleotide sequence ID" value="NC_003919.1"/>
</dbReference>
<dbReference type="SMR" id="Q8PIJ2"/>
<dbReference type="KEGG" id="xac:XAC2905"/>
<dbReference type="eggNOG" id="COG0629">
    <property type="taxonomic scope" value="Bacteria"/>
</dbReference>
<dbReference type="HOGENOM" id="CLU_078758_0_1_6"/>
<dbReference type="Proteomes" id="UP000000576">
    <property type="component" value="Chromosome"/>
</dbReference>
<dbReference type="GO" id="GO:0009295">
    <property type="term" value="C:nucleoid"/>
    <property type="evidence" value="ECO:0007669"/>
    <property type="project" value="TreeGrafter"/>
</dbReference>
<dbReference type="GO" id="GO:0003697">
    <property type="term" value="F:single-stranded DNA binding"/>
    <property type="evidence" value="ECO:0007669"/>
    <property type="project" value="UniProtKB-UniRule"/>
</dbReference>
<dbReference type="GO" id="GO:0006310">
    <property type="term" value="P:DNA recombination"/>
    <property type="evidence" value="ECO:0007669"/>
    <property type="project" value="UniProtKB-UniRule"/>
</dbReference>
<dbReference type="GO" id="GO:0006281">
    <property type="term" value="P:DNA repair"/>
    <property type="evidence" value="ECO:0007669"/>
    <property type="project" value="UniProtKB-UniRule"/>
</dbReference>
<dbReference type="GO" id="GO:0006260">
    <property type="term" value="P:DNA replication"/>
    <property type="evidence" value="ECO:0007669"/>
    <property type="project" value="UniProtKB-UniRule"/>
</dbReference>
<dbReference type="CDD" id="cd04496">
    <property type="entry name" value="SSB_OBF"/>
    <property type="match status" value="1"/>
</dbReference>
<dbReference type="FunFam" id="2.40.50.140:FF:000356">
    <property type="entry name" value="Single-stranded DNA-binding protein"/>
    <property type="match status" value="1"/>
</dbReference>
<dbReference type="Gene3D" id="2.40.50.140">
    <property type="entry name" value="Nucleic acid-binding proteins"/>
    <property type="match status" value="1"/>
</dbReference>
<dbReference type="HAMAP" id="MF_00984">
    <property type="entry name" value="SSB"/>
    <property type="match status" value="1"/>
</dbReference>
<dbReference type="InterPro" id="IPR012340">
    <property type="entry name" value="NA-bd_OB-fold"/>
</dbReference>
<dbReference type="InterPro" id="IPR000424">
    <property type="entry name" value="Primosome_PriB/ssb"/>
</dbReference>
<dbReference type="InterPro" id="IPR011344">
    <property type="entry name" value="ssDNA-bd"/>
</dbReference>
<dbReference type="NCBIfam" id="NF006445">
    <property type="entry name" value="PRK08763.1"/>
    <property type="match status" value="1"/>
</dbReference>
<dbReference type="NCBIfam" id="TIGR00621">
    <property type="entry name" value="ssb"/>
    <property type="match status" value="1"/>
</dbReference>
<dbReference type="PANTHER" id="PTHR10302">
    <property type="entry name" value="SINGLE-STRANDED DNA-BINDING PROTEIN"/>
    <property type="match status" value="1"/>
</dbReference>
<dbReference type="PANTHER" id="PTHR10302:SF27">
    <property type="entry name" value="SINGLE-STRANDED DNA-BINDING PROTEIN"/>
    <property type="match status" value="1"/>
</dbReference>
<dbReference type="Pfam" id="PF00436">
    <property type="entry name" value="SSB"/>
    <property type="match status" value="1"/>
</dbReference>
<dbReference type="PIRSF" id="PIRSF002070">
    <property type="entry name" value="SSB"/>
    <property type="match status" value="1"/>
</dbReference>
<dbReference type="SUPFAM" id="SSF50249">
    <property type="entry name" value="Nucleic acid-binding proteins"/>
    <property type="match status" value="1"/>
</dbReference>
<dbReference type="PROSITE" id="PS50935">
    <property type="entry name" value="SSB"/>
    <property type="match status" value="1"/>
</dbReference>
<feature type="chain" id="PRO_0000096141" description="Single-stranded DNA-binding protein">
    <location>
        <begin position="1"/>
        <end position="180"/>
    </location>
</feature>
<feature type="domain" description="SSB" evidence="1">
    <location>
        <begin position="5"/>
        <end position="109"/>
    </location>
</feature>
<feature type="region of interest" description="Disordered" evidence="2">
    <location>
        <begin position="107"/>
        <end position="180"/>
    </location>
</feature>
<feature type="short sequence motif" description="Important for interaction with partner proteins" evidence="1">
    <location>
        <begin position="175"/>
        <end position="180"/>
    </location>
</feature>
<feature type="compositionally biased region" description="Gly residues" evidence="2">
    <location>
        <begin position="109"/>
        <end position="121"/>
    </location>
</feature>
<feature type="compositionally biased region" description="Gly residues" evidence="2">
    <location>
        <begin position="132"/>
        <end position="152"/>
    </location>
</feature>
<feature type="compositionally biased region" description="Low complexity" evidence="2">
    <location>
        <begin position="157"/>
        <end position="169"/>
    </location>
</feature>
<comment type="function">
    <text evidence="1">Plays an important role in DNA replication, recombination and repair. Binds to ssDNA and to an array of partner proteins to recruit them to their sites of action during DNA metabolism.</text>
</comment>
<comment type="subunit">
    <text evidence="1">Homotetramer.</text>
</comment>
<evidence type="ECO:0000255" key="1">
    <source>
        <dbReference type="HAMAP-Rule" id="MF_00984"/>
    </source>
</evidence>
<evidence type="ECO:0000256" key="2">
    <source>
        <dbReference type="SAM" id="MobiDB-lite"/>
    </source>
</evidence>
<keyword id="KW-0227">DNA damage</keyword>
<keyword id="KW-0233">DNA recombination</keyword>
<keyword id="KW-0234">DNA repair</keyword>
<keyword id="KW-0235">DNA replication</keyword>
<keyword id="KW-0238">DNA-binding</keyword>